<comment type="function">
    <text>Involved in oxygen transport from the lung to the various peripheral tissues.</text>
</comment>
<comment type="subunit">
    <text>Heterotetramer of two alpha chains and two beta chains.</text>
</comment>
<comment type="tissue specificity">
    <text>Red blood cells.</text>
</comment>
<comment type="similarity">
    <text evidence="1">Belongs to the globin family.</text>
</comment>
<accession>P08260</accession>
<keyword id="KW-0903">Direct protein sequencing</keyword>
<keyword id="KW-0349">Heme</keyword>
<keyword id="KW-0408">Iron</keyword>
<keyword id="KW-0479">Metal-binding</keyword>
<keyword id="KW-0561">Oxygen transport</keyword>
<keyword id="KW-0813">Transport</keyword>
<feature type="chain" id="PRO_0000052661" description="Hemoglobin subunit alpha-A">
    <location>
        <begin position="1"/>
        <end position="141"/>
    </location>
</feature>
<feature type="domain" description="Globin" evidence="1">
    <location>
        <begin position="1"/>
        <end position="141"/>
    </location>
</feature>
<feature type="binding site" evidence="1">
    <location>
        <position position="58"/>
    </location>
    <ligand>
        <name>O2</name>
        <dbReference type="ChEBI" id="CHEBI:15379"/>
    </ligand>
</feature>
<feature type="binding site" description="proximal binding residue" evidence="1">
    <location>
        <position position="87"/>
    </location>
    <ligand>
        <name>heme b</name>
        <dbReference type="ChEBI" id="CHEBI:60344"/>
    </ligand>
    <ligandPart>
        <name>Fe</name>
        <dbReference type="ChEBI" id="CHEBI:18248"/>
    </ligandPart>
</feature>
<organism>
    <name type="scientific">Chroicocephalus ridibundus</name>
    <name type="common">Black-headed gull</name>
    <name type="synonym">Larus ridibundus</name>
    <dbReference type="NCBI Taxonomy" id="1192867"/>
    <lineage>
        <taxon>Eukaryota</taxon>
        <taxon>Metazoa</taxon>
        <taxon>Chordata</taxon>
        <taxon>Craniata</taxon>
        <taxon>Vertebrata</taxon>
        <taxon>Euteleostomi</taxon>
        <taxon>Archelosauria</taxon>
        <taxon>Archosauria</taxon>
        <taxon>Dinosauria</taxon>
        <taxon>Saurischia</taxon>
        <taxon>Theropoda</taxon>
        <taxon>Coelurosauria</taxon>
        <taxon>Aves</taxon>
        <taxon>Neognathae</taxon>
        <taxon>Neoaves</taxon>
        <taxon>Charadriiformes</taxon>
        <taxon>Laridae</taxon>
        <taxon>Chroicocephalus</taxon>
    </lineage>
</organism>
<evidence type="ECO:0000255" key="1">
    <source>
        <dbReference type="PROSITE-ProRule" id="PRU00238"/>
    </source>
</evidence>
<sequence length="141" mass="15233">VLSGSDKTNVKGVFGKIGGHAEEYGAETLERMFATYPQTKTYFPHFDLQHGSAQVKAHGKKVAAALVEAANHIDDIAGALSKLSDLHAQKLRVDPVNFKLLGQCFLVVVAIHHPSVLTPEVHASLDKFLCAVGNVLTAKYR</sequence>
<reference key="1">
    <citation type="journal article" date="1988" name="Biol. Chem. Hoppe-Seyler">
        <title>Structural adaptation of bird hemoglobins to high-altitude respiration and the primary sequences of black-headed gull (Larus ridibundus, Charadriiformes) alpha A- and beta/beta'-chains.</title>
        <authorList>
            <person name="Godovac-Zimmermann J."/>
            <person name="Kosters J."/>
            <person name="Braunitzer G."/>
            <person name="Goltenboth R."/>
        </authorList>
    </citation>
    <scope>PROTEIN SEQUENCE</scope>
</reference>
<gene>
    <name type="primary">HBAA</name>
</gene>
<name>HBA_CHRRI</name>
<dbReference type="PIR" id="S00814">
    <property type="entry name" value="HAGLAB"/>
</dbReference>
<dbReference type="SMR" id="P08260"/>
<dbReference type="GO" id="GO:0072562">
    <property type="term" value="C:blood microparticle"/>
    <property type="evidence" value="ECO:0007669"/>
    <property type="project" value="TreeGrafter"/>
</dbReference>
<dbReference type="GO" id="GO:0031838">
    <property type="term" value="C:haptoglobin-hemoglobin complex"/>
    <property type="evidence" value="ECO:0007669"/>
    <property type="project" value="TreeGrafter"/>
</dbReference>
<dbReference type="GO" id="GO:0005833">
    <property type="term" value="C:hemoglobin complex"/>
    <property type="evidence" value="ECO:0007669"/>
    <property type="project" value="InterPro"/>
</dbReference>
<dbReference type="GO" id="GO:0031720">
    <property type="term" value="F:haptoglobin binding"/>
    <property type="evidence" value="ECO:0007669"/>
    <property type="project" value="TreeGrafter"/>
</dbReference>
<dbReference type="GO" id="GO:0020037">
    <property type="term" value="F:heme binding"/>
    <property type="evidence" value="ECO:0007669"/>
    <property type="project" value="InterPro"/>
</dbReference>
<dbReference type="GO" id="GO:0005506">
    <property type="term" value="F:iron ion binding"/>
    <property type="evidence" value="ECO:0007669"/>
    <property type="project" value="InterPro"/>
</dbReference>
<dbReference type="GO" id="GO:0043177">
    <property type="term" value="F:organic acid binding"/>
    <property type="evidence" value="ECO:0007669"/>
    <property type="project" value="TreeGrafter"/>
</dbReference>
<dbReference type="GO" id="GO:0019825">
    <property type="term" value="F:oxygen binding"/>
    <property type="evidence" value="ECO:0007669"/>
    <property type="project" value="InterPro"/>
</dbReference>
<dbReference type="GO" id="GO:0005344">
    <property type="term" value="F:oxygen carrier activity"/>
    <property type="evidence" value="ECO:0007669"/>
    <property type="project" value="UniProtKB-KW"/>
</dbReference>
<dbReference type="GO" id="GO:0004601">
    <property type="term" value="F:peroxidase activity"/>
    <property type="evidence" value="ECO:0007669"/>
    <property type="project" value="TreeGrafter"/>
</dbReference>
<dbReference type="GO" id="GO:0042744">
    <property type="term" value="P:hydrogen peroxide catabolic process"/>
    <property type="evidence" value="ECO:0007669"/>
    <property type="project" value="TreeGrafter"/>
</dbReference>
<dbReference type="CDD" id="cd08927">
    <property type="entry name" value="Hb-alpha-like"/>
    <property type="match status" value="1"/>
</dbReference>
<dbReference type="FunFam" id="1.10.490.10:FF:000002">
    <property type="entry name" value="Hemoglobin subunit alpha"/>
    <property type="match status" value="1"/>
</dbReference>
<dbReference type="Gene3D" id="1.10.490.10">
    <property type="entry name" value="Globins"/>
    <property type="match status" value="1"/>
</dbReference>
<dbReference type="InterPro" id="IPR000971">
    <property type="entry name" value="Globin"/>
</dbReference>
<dbReference type="InterPro" id="IPR009050">
    <property type="entry name" value="Globin-like_sf"/>
</dbReference>
<dbReference type="InterPro" id="IPR012292">
    <property type="entry name" value="Globin/Proto"/>
</dbReference>
<dbReference type="InterPro" id="IPR002338">
    <property type="entry name" value="Hemoglobin_a-typ"/>
</dbReference>
<dbReference type="InterPro" id="IPR050056">
    <property type="entry name" value="Hemoglobin_oxygen_transport"/>
</dbReference>
<dbReference type="InterPro" id="IPR002339">
    <property type="entry name" value="Hemoglobin_pi"/>
</dbReference>
<dbReference type="PANTHER" id="PTHR11442">
    <property type="entry name" value="HEMOGLOBIN FAMILY MEMBER"/>
    <property type="match status" value="1"/>
</dbReference>
<dbReference type="PANTHER" id="PTHR11442:SF48">
    <property type="entry name" value="HEMOGLOBIN SUBUNIT ALPHA"/>
    <property type="match status" value="1"/>
</dbReference>
<dbReference type="Pfam" id="PF00042">
    <property type="entry name" value="Globin"/>
    <property type="match status" value="1"/>
</dbReference>
<dbReference type="PRINTS" id="PR00612">
    <property type="entry name" value="ALPHAHAEM"/>
</dbReference>
<dbReference type="PRINTS" id="PR00815">
    <property type="entry name" value="PIHAEM"/>
</dbReference>
<dbReference type="SUPFAM" id="SSF46458">
    <property type="entry name" value="Globin-like"/>
    <property type="match status" value="1"/>
</dbReference>
<dbReference type="PROSITE" id="PS01033">
    <property type="entry name" value="GLOBIN"/>
    <property type="match status" value="1"/>
</dbReference>
<proteinExistence type="evidence at protein level"/>
<protein>
    <recommendedName>
        <fullName>Hemoglobin subunit alpha-A</fullName>
    </recommendedName>
    <alternativeName>
        <fullName>Alpha-A-globin</fullName>
    </alternativeName>
    <alternativeName>
        <fullName>Hemoglobin alpha-A chain</fullName>
    </alternativeName>
</protein>